<comment type="function">
    <text evidence="1">Binds specifically to phosphatidylinositol 3,4-diphosphate (PtdIns3,4P2), but not to other phosphoinositides. May recruit other proteins to the plasma membrane (By similarity).</text>
</comment>
<comment type="subunit">
    <text evidence="1">Binds MPDZ and PTPN13.</text>
</comment>
<comment type="subcellular location">
    <subcellularLocation>
        <location evidence="1">Cytoplasm</location>
    </subcellularLocation>
    <subcellularLocation>
        <location evidence="1">Cell membrane</location>
        <topology evidence="1">Peripheral membrane protein</topology>
    </subcellularLocation>
    <subcellularLocation>
        <location evidence="1">Nucleus</location>
    </subcellularLocation>
    <text evidence="1">Locates to the plasma membrane after treatments that stimulate the production of PtdIns3,4P2.</text>
</comment>
<reference key="1">
    <citation type="submission" date="2005-08" db="EMBL/GenBank/DDBJ databases">
        <authorList>
            <consortium name="NIH - Mammalian Gene Collection (MGC) project"/>
        </authorList>
    </citation>
    <scope>NUCLEOTIDE SEQUENCE [LARGE SCALE MRNA]</scope>
    <source>
        <strain>Hereford</strain>
        <tissue>Uterus</tissue>
    </source>
</reference>
<accession>Q3ZBA3</accession>
<proteinExistence type="evidence at transcript level"/>
<organism>
    <name type="scientific">Bos taurus</name>
    <name type="common">Bovine</name>
    <dbReference type="NCBI Taxonomy" id="9913"/>
    <lineage>
        <taxon>Eukaryota</taxon>
        <taxon>Metazoa</taxon>
        <taxon>Chordata</taxon>
        <taxon>Craniata</taxon>
        <taxon>Vertebrata</taxon>
        <taxon>Euteleostomi</taxon>
        <taxon>Mammalia</taxon>
        <taxon>Eutheria</taxon>
        <taxon>Laurasiatheria</taxon>
        <taxon>Artiodactyla</taxon>
        <taxon>Ruminantia</taxon>
        <taxon>Pecora</taxon>
        <taxon>Bovidae</taxon>
        <taxon>Bovinae</taxon>
        <taxon>Bos</taxon>
    </lineage>
</organism>
<feature type="chain" id="PRO_0000053875" description="Pleckstrin homology domain-containing family A member 2">
    <location>
        <begin position="1"/>
        <end position="425"/>
    </location>
</feature>
<feature type="domain" description="PH 1" evidence="3">
    <location>
        <begin position="7"/>
        <end position="113"/>
    </location>
</feature>
<feature type="domain" description="PH 2" evidence="3">
    <location>
        <begin position="198"/>
        <end position="298"/>
    </location>
</feature>
<feature type="region of interest" description="Disordered" evidence="4">
    <location>
        <begin position="374"/>
        <end position="410"/>
    </location>
</feature>
<feature type="compositionally biased region" description="Basic and acidic residues" evidence="4">
    <location>
        <begin position="400"/>
        <end position="410"/>
    </location>
</feature>
<feature type="modified residue" description="Phosphoserine" evidence="2">
    <location>
        <position position="184"/>
    </location>
</feature>
<feature type="modified residue" description="Phosphoserine" evidence="2">
    <location>
        <position position="314"/>
    </location>
</feature>
<feature type="modified residue" description="Phosphoserine" evidence="2">
    <location>
        <position position="349"/>
    </location>
</feature>
<feature type="cross-link" description="Glycyl lysine isopeptide (Lys-Gly) (interchain with G-Cter in SUMO2)" evidence="2">
    <location>
        <position position="141"/>
    </location>
</feature>
<evidence type="ECO:0000250" key="1"/>
<evidence type="ECO:0000250" key="2">
    <source>
        <dbReference type="UniProtKB" id="Q9HB19"/>
    </source>
</evidence>
<evidence type="ECO:0000255" key="3">
    <source>
        <dbReference type="PROSITE-ProRule" id="PRU00145"/>
    </source>
</evidence>
<evidence type="ECO:0000256" key="4">
    <source>
        <dbReference type="SAM" id="MobiDB-lite"/>
    </source>
</evidence>
<name>PKHA2_BOVIN</name>
<sequence>MPYVDRQNRICGFLDIEENENSGKFLRRYFILDTQANCLLWYMDNPQNLAIGAGAVGSLQLTYISKVSIATPKQKPKTPFCFVINALSQRYFLQANDQKDLKDWVEALNQASKITVPKAGNLPLTTEVLKSLATPLALEKKPQVAYKTEIIGGVVVHTPINQNGGDGQEVGEPGSHAILRRSQSYIPTTGCRGPTGPPLIKSGYCVKQGNVRKSWKRRFFALDDFTICYFKCEQDREPLRTIFLKDVLKTHECLVKSGDLLMRDNLFEIITSSRTFYVQADSPEDMHSWIKEIGAAVQALKCHPREMSFSRSISLTRPGSSSLSGGPNSILCRGRAPGEERKTLCKAPSLASSWQPWTPVPQAGEKLLPTEETAEDSLFTPRLGESSTSAVLPSSRIRHRSEPQHPKEKPFVFNLDDENIRTSDV</sequence>
<protein>
    <recommendedName>
        <fullName>Pleckstrin homology domain-containing family A member 2</fullName>
        <shortName>PH domain-containing family A member 2</shortName>
    </recommendedName>
</protein>
<gene>
    <name type="primary">PLEKHA2</name>
</gene>
<keyword id="KW-1003">Cell membrane</keyword>
<keyword id="KW-0963">Cytoplasm</keyword>
<keyword id="KW-1017">Isopeptide bond</keyword>
<keyword id="KW-0446">Lipid-binding</keyword>
<keyword id="KW-0472">Membrane</keyword>
<keyword id="KW-0539">Nucleus</keyword>
<keyword id="KW-0597">Phosphoprotein</keyword>
<keyword id="KW-1185">Reference proteome</keyword>
<keyword id="KW-0677">Repeat</keyword>
<keyword id="KW-0832">Ubl conjugation</keyword>
<dbReference type="EMBL" id="BC103474">
    <property type="protein sequence ID" value="AAI03475.1"/>
    <property type="molecule type" value="mRNA"/>
</dbReference>
<dbReference type="RefSeq" id="NP_001030460.1">
    <property type="nucleotide sequence ID" value="NM_001035383.2"/>
</dbReference>
<dbReference type="RefSeq" id="NP_001414819.1">
    <property type="nucleotide sequence ID" value="NM_001427890.1"/>
</dbReference>
<dbReference type="RefSeq" id="NP_001414820.1">
    <property type="nucleotide sequence ID" value="NM_001427891.1"/>
</dbReference>
<dbReference type="RefSeq" id="NP_001414821.1">
    <property type="nucleotide sequence ID" value="NM_001427892.1"/>
</dbReference>
<dbReference type="SMR" id="Q3ZBA3"/>
<dbReference type="FunCoup" id="Q3ZBA3">
    <property type="interactions" value="363"/>
</dbReference>
<dbReference type="STRING" id="9913.ENSBTAP00000068621"/>
<dbReference type="PaxDb" id="9913-ENSBTAP00000031440"/>
<dbReference type="Ensembl" id="ENSBTAT00000078362.2">
    <property type="protein sequence ID" value="ENSBTAP00000068621.1"/>
    <property type="gene ID" value="ENSBTAG00000003509.6"/>
</dbReference>
<dbReference type="GeneID" id="530879"/>
<dbReference type="KEGG" id="bta:530879"/>
<dbReference type="CTD" id="59339"/>
<dbReference type="VEuPathDB" id="HostDB:ENSBTAG00000003509"/>
<dbReference type="VGNC" id="VGNC:33004">
    <property type="gene designation" value="PLEKHA2"/>
</dbReference>
<dbReference type="eggNOG" id="ENOG502QV0M">
    <property type="taxonomic scope" value="Eukaryota"/>
</dbReference>
<dbReference type="GeneTree" id="ENSGT00940000158064"/>
<dbReference type="HOGENOM" id="CLU_055135_1_0_1"/>
<dbReference type="InParanoid" id="Q3ZBA3"/>
<dbReference type="OMA" id="KCHPKEM"/>
<dbReference type="OrthoDB" id="185175at2759"/>
<dbReference type="Reactome" id="R-BTA-1660499">
    <property type="pathway name" value="Synthesis of PIPs at the plasma membrane"/>
</dbReference>
<dbReference type="Proteomes" id="UP000009136">
    <property type="component" value="Chromosome 27"/>
</dbReference>
<dbReference type="Bgee" id="ENSBTAG00000003509">
    <property type="expression patterns" value="Expressed in neutrophil and 102 other cell types or tissues"/>
</dbReference>
<dbReference type="GO" id="GO:0005737">
    <property type="term" value="C:cytoplasm"/>
    <property type="evidence" value="ECO:0000318"/>
    <property type="project" value="GO_Central"/>
</dbReference>
<dbReference type="GO" id="GO:0005634">
    <property type="term" value="C:nucleus"/>
    <property type="evidence" value="ECO:0007669"/>
    <property type="project" value="UniProtKB-SubCell"/>
</dbReference>
<dbReference type="GO" id="GO:0005886">
    <property type="term" value="C:plasma membrane"/>
    <property type="evidence" value="ECO:0000318"/>
    <property type="project" value="GO_Central"/>
</dbReference>
<dbReference type="GO" id="GO:0032991">
    <property type="term" value="C:protein-containing complex"/>
    <property type="evidence" value="ECO:0007669"/>
    <property type="project" value="Ensembl"/>
</dbReference>
<dbReference type="GO" id="GO:0001968">
    <property type="term" value="F:fibronectin binding"/>
    <property type="evidence" value="ECO:0007669"/>
    <property type="project" value="Ensembl"/>
</dbReference>
<dbReference type="GO" id="GO:0043236">
    <property type="term" value="F:laminin binding"/>
    <property type="evidence" value="ECO:0007669"/>
    <property type="project" value="Ensembl"/>
</dbReference>
<dbReference type="GO" id="GO:0030165">
    <property type="term" value="F:PDZ domain binding"/>
    <property type="evidence" value="ECO:0007669"/>
    <property type="project" value="Ensembl"/>
</dbReference>
<dbReference type="GO" id="GO:0043325">
    <property type="term" value="F:phosphatidylinositol-3,4-bisphosphate binding"/>
    <property type="evidence" value="ECO:0000318"/>
    <property type="project" value="GO_Central"/>
</dbReference>
<dbReference type="GO" id="GO:0005543">
    <property type="term" value="F:phospholipid binding"/>
    <property type="evidence" value="ECO:0000318"/>
    <property type="project" value="GO_Central"/>
</dbReference>
<dbReference type="GO" id="GO:0001954">
    <property type="term" value="P:positive regulation of cell-matrix adhesion"/>
    <property type="evidence" value="ECO:0007669"/>
    <property type="project" value="Ensembl"/>
</dbReference>
<dbReference type="CDD" id="cd13270">
    <property type="entry name" value="PH1_TAPP1_2"/>
    <property type="match status" value="1"/>
</dbReference>
<dbReference type="CDD" id="cd13271">
    <property type="entry name" value="PH2_TAPP1_2"/>
    <property type="match status" value="1"/>
</dbReference>
<dbReference type="FunFam" id="2.30.29.30:FF:000049">
    <property type="entry name" value="pleckstrin homology domain-containing family A member 1 isoform X1"/>
    <property type="match status" value="1"/>
</dbReference>
<dbReference type="FunFam" id="2.30.29.30:FF:000042">
    <property type="entry name" value="pleckstrin homology domain-containing family A member 1 isoform X2"/>
    <property type="match status" value="1"/>
</dbReference>
<dbReference type="Gene3D" id="2.30.29.30">
    <property type="entry name" value="Pleckstrin-homology domain (PH domain)/Phosphotyrosine-binding domain (PTB)"/>
    <property type="match status" value="2"/>
</dbReference>
<dbReference type="InterPro" id="IPR011993">
    <property type="entry name" value="PH-like_dom_sf"/>
</dbReference>
<dbReference type="InterPro" id="IPR001849">
    <property type="entry name" value="PH_domain"/>
</dbReference>
<dbReference type="InterPro" id="IPR051707">
    <property type="entry name" value="PI-Interact_SigTrans_Reg"/>
</dbReference>
<dbReference type="PANTHER" id="PTHR14336:SF5">
    <property type="entry name" value="PLECKSTRIN HOMOLOGY DOMAIN-CONTAINING FAMILY A MEMBER 2"/>
    <property type="match status" value="1"/>
</dbReference>
<dbReference type="PANTHER" id="PTHR14336">
    <property type="entry name" value="TANDEM PH DOMAIN CONTAINING PROTEIN"/>
    <property type="match status" value="1"/>
</dbReference>
<dbReference type="Pfam" id="PF00169">
    <property type="entry name" value="PH"/>
    <property type="match status" value="2"/>
</dbReference>
<dbReference type="SMART" id="SM00233">
    <property type="entry name" value="PH"/>
    <property type="match status" value="2"/>
</dbReference>
<dbReference type="SUPFAM" id="SSF50729">
    <property type="entry name" value="PH domain-like"/>
    <property type="match status" value="2"/>
</dbReference>
<dbReference type="PROSITE" id="PS50003">
    <property type="entry name" value="PH_DOMAIN"/>
    <property type="match status" value="2"/>
</dbReference>